<reference key="1">
    <citation type="journal article" date="2008" name="J. Bacteriol.">
        <title>The complete genome sequence of Escherichia coli DH10B: insights into the biology of a laboratory workhorse.</title>
        <authorList>
            <person name="Durfee T."/>
            <person name="Nelson R."/>
            <person name="Baldwin S."/>
            <person name="Plunkett G. III"/>
            <person name="Burland V."/>
            <person name="Mau B."/>
            <person name="Petrosino J.F."/>
            <person name="Qin X."/>
            <person name="Muzny D.M."/>
            <person name="Ayele M."/>
            <person name="Gibbs R.A."/>
            <person name="Csorgo B."/>
            <person name="Posfai G."/>
            <person name="Weinstock G.M."/>
            <person name="Blattner F.R."/>
        </authorList>
    </citation>
    <scope>NUCLEOTIDE SEQUENCE [LARGE SCALE GENOMIC DNA]</scope>
    <source>
        <strain>K12 / DH10B</strain>
    </source>
</reference>
<accession>B1X9J2</accession>
<keyword id="KW-0975">Bacterial flagellum</keyword>
<keyword id="KW-0998">Cell outer membrane</keyword>
<keyword id="KW-0449">Lipoprotein</keyword>
<keyword id="KW-0472">Membrane</keyword>
<keyword id="KW-0564">Palmitate</keyword>
<keyword id="KW-0732">Signal</keyword>
<feature type="signal peptide" evidence="1">
    <location>
        <begin position="1"/>
        <end position="21"/>
    </location>
</feature>
<feature type="chain" id="PRO_1000123948" description="Flagellar L-ring protein">
    <location>
        <begin position="22"/>
        <end position="232"/>
    </location>
</feature>
<feature type="lipid moiety-binding region" description="N-palmitoyl cysteine" evidence="1">
    <location>
        <position position="22"/>
    </location>
</feature>
<feature type="lipid moiety-binding region" description="S-diacylglycerol cysteine" evidence="1">
    <location>
        <position position="22"/>
    </location>
</feature>
<evidence type="ECO:0000255" key="1">
    <source>
        <dbReference type="HAMAP-Rule" id="MF_00415"/>
    </source>
</evidence>
<sequence length="232" mass="24615">MQKNAAHTYAISSLLVLSLTGCAWIPSTPLVQGATSAQPVPGPTPVANGSIFQSAQPINYGYQPLFEDRRPRNIGDTLTIVLQENVSASKSSSANASRDGKTNFGFDTVPRYLQGLFGNARADVEASGGNTFNGKGGANASNTFSGTLTVTVDQVLVNGNLHVVGEKQIAINQGTEFIRFSGVVNPRTISGSNTVPSTQVADARIEYVGNGYINEAQNMGWLQRFFLNLSPM</sequence>
<dbReference type="EMBL" id="CP000948">
    <property type="protein sequence ID" value="ACB02272.1"/>
    <property type="molecule type" value="Genomic_DNA"/>
</dbReference>
<dbReference type="RefSeq" id="WP_001295442.1">
    <property type="nucleotide sequence ID" value="NC_010473.1"/>
</dbReference>
<dbReference type="SMR" id="B1X9J2"/>
<dbReference type="GeneID" id="93776328"/>
<dbReference type="KEGG" id="ecd:ECDH10B_1150"/>
<dbReference type="HOGENOM" id="CLU_069313_0_0_6"/>
<dbReference type="GO" id="GO:0009427">
    <property type="term" value="C:bacterial-type flagellum basal body, distal rod, L ring"/>
    <property type="evidence" value="ECO:0007669"/>
    <property type="project" value="InterPro"/>
</dbReference>
<dbReference type="GO" id="GO:0009279">
    <property type="term" value="C:cell outer membrane"/>
    <property type="evidence" value="ECO:0007669"/>
    <property type="project" value="UniProtKB-SubCell"/>
</dbReference>
<dbReference type="GO" id="GO:0003774">
    <property type="term" value="F:cytoskeletal motor activity"/>
    <property type="evidence" value="ECO:0007669"/>
    <property type="project" value="InterPro"/>
</dbReference>
<dbReference type="GO" id="GO:0071973">
    <property type="term" value="P:bacterial-type flagellum-dependent cell motility"/>
    <property type="evidence" value="ECO:0007669"/>
    <property type="project" value="InterPro"/>
</dbReference>
<dbReference type="HAMAP" id="MF_00415">
    <property type="entry name" value="FlgH"/>
    <property type="match status" value="1"/>
</dbReference>
<dbReference type="InterPro" id="IPR000527">
    <property type="entry name" value="Flag_Lring"/>
</dbReference>
<dbReference type="NCBIfam" id="NF001301">
    <property type="entry name" value="PRK00249.1-1"/>
    <property type="match status" value="1"/>
</dbReference>
<dbReference type="PANTHER" id="PTHR34933">
    <property type="entry name" value="FLAGELLAR L-RING PROTEIN"/>
    <property type="match status" value="1"/>
</dbReference>
<dbReference type="PANTHER" id="PTHR34933:SF3">
    <property type="entry name" value="FLAGELLAR L-RING PROTEIN"/>
    <property type="match status" value="1"/>
</dbReference>
<dbReference type="Pfam" id="PF02107">
    <property type="entry name" value="FlgH"/>
    <property type="match status" value="1"/>
</dbReference>
<dbReference type="PRINTS" id="PR01008">
    <property type="entry name" value="FLGLRINGFLGH"/>
</dbReference>
<dbReference type="PROSITE" id="PS51257">
    <property type="entry name" value="PROKAR_LIPOPROTEIN"/>
    <property type="match status" value="1"/>
</dbReference>
<organism>
    <name type="scientific">Escherichia coli (strain K12 / DH10B)</name>
    <dbReference type="NCBI Taxonomy" id="316385"/>
    <lineage>
        <taxon>Bacteria</taxon>
        <taxon>Pseudomonadati</taxon>
        <taxon>Pseudomonadota</taxon>
        <taxon>Gammaproteobacteria</taxon>
        <taxon>Enterobacterales</taxon>
        <taxon>Enterobacteriaceae</taxon>
        <taxon>Escherichia</taxon>
    </lineage>
</organism>
<gene>
    <name evidence="1" type="primary">flgH</name>
    <name type="ordered locus">ECDH10B_1150</name>
</gene>
<comment type="function">
    <text evidence="1">Assembles around the rod to form the L-ring and probably protects the motor/basal body from shearing forces during rotation.</text>
</comment>
<comment type="subunit">
    <text evidence="1">The basal body constitutes a major portion of the flagellar organelle and consists of four rings (L,P,S, and M) mounted on a central rod.</text>
</comment>
<comment type="subcellular location">
    <subcellularLocation>
        <location evidence="1">Cell outer membrane</location>
        <topology evidence="1">Lipid-anchor</topology>
    </subcellularLocation>
    <subcellularLocation>
        <location evidence="1">Bacterial flagellum basal body</location>
    </subcellularLocation>
</comment>
<comment type="similarity">
    <text evidence="1">Belongs to the FlgH family.</text>
</comment>
<proteinExistence type="inferred from homology"/>
<protein>
    <recommendedName>
        <fullName evidence="1">Flagellar L-ring protein</fullName>
    </recommendedName>
    <alternativeName>
        <fullName evidence="1">Basal body L-ring protein</fullName>
    </alternativeName>
</protein>
<name>FLGH_ECODH</name>